<feature type="chain" id="PRO_0000251817" description="NADH dehydrogenase [ubiquinone] 1 alpha subcomplex subunit 12">
    <location>
        <begin position="1"/>
        <end position="145"/>
    </location>
</feature>
<feature type="modified residue" description="N-acetylmethionine" evidence="1">
    <location>
        <position position="1"/>
    </location>
</feature>
<evidence type="ECO:0000250" key="1">
    <source>
        <dbReference type="UniProtKB" id="O97725"/>
    </source>
</evidence>
<evidence type="ECO:0000250" key="2">
    <source>
        <dbReference type="UniProtKB" id="Q9UI09"/>
    </source>
</evidence>
<evidence type="ECO:0000255" key="3"/>
<evidence type="ECO:0000305" key="4"/>
<keyword id="KW-0007">Acetylation</keyword>
<keyword id="KW-0249">Electron transport</keyword>
<keyword id="KW-0472">Membrane</keyword>
<keyword id="KW-0496">Mitochondrion</keyword>
<keyword id="KW-0999">Mitochondrion inner membrane</keyword>
<keyword id="KW-1185">Reference proteome</keyword>
<keyword id="KW-0679">Respiratory chain</keyword>
<keyword id="KW-0813">Transport</keyword>
<gene>
    <name type="primary">NDUFA12</name>
</gene>
<comment type="function">
    <text evidence="2">Accessory subunit of the mitochondrial membrane respiratory chain NADH dehydrogenase (Complex I), that is believed not to be involved in catalysis. Complex I functions in the transfer of electrons from NADH to the respiratory chain. The immediate electron acceptor for the enzyme is believed to be ubiquinone.</text>
</comment>
<comment type="subunit">
    <text evidence="2">Complex I is composed of 45 different subunits.</text>
</comment>
<comment type="subcellular location">
    <subcellularLocation>
        <location evidence="2">Mitochondrion inner membrane</location>
        <topology evidence="3">Peripheral membrane protein</topology>
        <orientation evidence="2">Matrix side</orientation>
    </subcellularLocation>
</comment>
<comment type="similarity">
    <text evidence="4">Belongs to the complex I NDUFA12 subunit family.</text>
</comment>
<dbReference type="EMBL" id="DQ885748">
    <property type="protein sequence ID" value="ABH12257.1"/>
    <property type="molecule type" value="mRNA"/>
</dbReference>
<dbReference type="RefSeq" id="NP_001266545.1">
    <property type="nucleotide sequence ID" value="NM_001279616.1"/>
</dbReference>
<dbReference type="SMR" id="Q0MQ86"/>
<dbReference type="FunCoup" id="Q0MQ86">
    <property type="interactions" value="2161"/>
</dbReference>
<dbReference type="STRING" id="9593.ENSGGOP00000012562"/>
<dbReference type="Ensembl" id="ENSGGOT00000012924.3">
    <property type="protein sequence ID" value="ENSGGOP00000012562.3"/>
    <property type="gene ID" value="ENSGGOG00000012880.3"/>
</dbReference>
<dbReference type="GeneID" id="101148753"/>
<dbReference type="KEGG" id="ggo:101148753"/>
<dbReference type="CTD" id="55967"/>
<dbReference type="eggNOG" id="KOG3382">
    <property type="taxonomic scope" value="Eukaryota"/>
</dbReference>
<dbReference type="GeneTree" id="ENSGT00390000005848"/>
<dbReference type="HOGENOM" id="CLU_110455_1_0_1"/>
<dbReference type="InParanoid" id="Q0MQ86"/>
<dbReference type="OMA" id="VIYTAEM"/>
<dbReference type="OrthoDB" id="16560at9604"/>
<dbReference type="Proteomes" id="UP000001519">
    <property type="component" value="Chromosome 12"/>
</dbReference>
<dbReference type="Bgee" id="ENSGGOG00000012880">
    <property type="expression patterns" value="Expressed in heart and 6 other cell types or tissues"/>
</dbReference>
<dbReference type="GO" id="GO:0005743">
    <property type="term" value="C:mitochondrial inner membrane"/>
    <property type="evidence" value="ECO:0007669"/>
    <property type="project" value="UniProtKB-SubCell"/>
</dbReference>
<dbReference type="GO" id="GO:0045271">
    <property type="term" value="C:respiratory chain complex I"/>
    <property type="evidence" value="ECO:0000250"/>
    <property type="project" value="UniProtKB"/>
</dbReference>
<dbReference type="GO" id="GO:0042775">
    <property type="term" value="P:mitochondrial ATP synthesis coupled electron transport"/>
    <property type="evidence" value="ECO:0007669"/>
    <property type="project" value="Ensembl"/>
</dbReference>
<dbReference type="InterPro" id="IPR007763">
    <property type="entry name" value="NDUFA12"/>
</dbReference>
<dbReference type="PANTHER" id="PTHR12910:SF2">
    <property type="entry name" value="NADH DEHYDROGENASE [UBIQUINONE] 1 ALPHA SUBCOMPLEX SUBUNIT 12"/>
    <property type="match status" value="1"/>
</dbReference>
<dbReference type="PANTHER" id="PTHR12910">
    <property type="entry name" value="NADH-UBIQUINONE OXIDOREDUCTASE SUBUNIT B17.2"/>
    <property type="match status" value="1"/>
</dbReference>
<dbReference type="Pfam" id="PF05071">
    <property type="entry name" value="NDUFA12"/>
    <property type="match status" value="1"/>
</dbReference>
<organism>
    <name type="scientific">Gorilla gorilla gorilla</name>
    <name type="common">Western lowland gorilla</name>
    <dbReference type="NCBI Taxonomy" id="9595"/>
    <lineage>
        <taxon>Eukaryota</taxon>
        <taxon>Metazoa</taxon>
        <taxon>Chordata</taxon>
        <taxon>Craniata</taxon>
        <taxon>Vertebrata</taxon>
        <taxon>Euteleostomi</taxon>
        <taxon>Mammalia</taxon>
        <taxon>Eutheria</taxon>
        <taxon>Euarchontoglires</taxon>
        <taxon>Primates</taxon>
        <taxon>Haplorrhini</taxon>
        <taxon>Catarrhini</taxon>
        <taxon>Hominidae</taxon>
        <taxon>Gorilla</taxon>
    </lineage>
</organism>
<protein>
    <recommendedName>
        <fullName>NADH dehydrogenase [ubiquinone] 1 alpha subcomplex subunit 12</fullName>
    </recommendedName>
    <alternativeName>
        <fullName>Complex I-B17.2</fullName>
        <shortName>CI-B17.2</shortName>
        <shortName>CIB17.2</shortName>
    </alternativeName>
    <alternativeName>
        <fullName>NADH-ubiquinone oxidoreductase subunit B17.2</fullName>
    </alternativeName>
</protein>
<sequence>MELVQVLKRGLQQITGHGGLRGYLRVFFRTNDAKVGTLVGEDKYGNKYYEDNKQFFGRHRWVVYTTEMNGKNTFWDVDGSMVPPEWHRWLHSMTDDPPTTKPLTARKFIWTNHKFNMTGTPEQYVPYSTTRKKIQEWIPPSTPYK</sequence>
<reference key="1">
    <citation type="journal article" date="2006" name="Gene">
        <title>Adaptive selection of mitochondrial complex I subunits during primate radiation.</title>
        <authorList>
            <person name="Mishmar D."/>
            <person name="Ruiz-Pesini E."/>
            <person name="Mondragon-Palomino M."/>
            <person name="Procaccio V."/>
            <person name="Gaut B."/>
            <person name="Wallace D.C."/>
        </authorList>
    </citation>
    <scope>NUCLEOTIDE SEQUENCE [MRNA]</scope>
</reference>
<proteinExistence type="evidence at transcript level"/>
<accession>Q0MQ86</accession>
<name>NDUAC_GORGO</name>